<gene>
    <name evidence="1" type="primary">albA</name>
    <name type="ordered locus">Saci_1322</name>
</gene>
<feature type="chain" id="PRO_0000151709" description="DNA/RNA-binding protein Alba">
    <location>
        <begin position="1"/>
        <end position="97"/>
    </location>
</feature>
<feature type="modified residue" description="N6-acetyllysine" evidence="1">
    <location>
        <position position="15"/>
    </location>
</feature>
<name>ALBA_SULAC</name>
<dbReference type="EMBL" id="CP000077">
    <property type="protein sequence ID" value="AAY80657.1"/>
    <property type="molecule type" value="Genomic_DNA"/>
</dbReference>
<dbReference type="RefSeq" id="WP_011278159.1">
    <property type="nucleotide sequence ID" value="NC_007181.1"/>
</dbReference>
<dbReference type="PDB" id="8XAO">
    <property type="method" value="X-ray"/>
    <property type="resolution" value="2.05 A"/>
    <property type="chains" value="A/B=1-97"/>
</dbReference>
<dbReference type="PDB" id="8XAQ">
    <property type="method" value="X-ray"/>
    <property type="resolution" value="1.40 A"/>
    <property type="chains" value="A/B=1-97"/>
</dbReference>
<dbReference type="PDBsum" id="8XAO"/>
<dbReference type="PDBsum" id="8XAQ"/>
<dbReference type="SMR" id="Q4J973"/>
<dbReference type="STRING" id="330779.Saci_1322"/>
<dbReference type="GeneID" id="14551825"/>
<dbReference type="GeneID" id="78441668"/>
<dbReference type="KEGG" id="sai:Saci_1322"/>
<dbReference type="PATRIC" id="fig|330779.12.peg.1275"/>
<dbReference type="eggNOG" id="arCOG01753">
    <property type="taxonomic scope" value="Archaea"/>
</dbReference>
<dbReference type="HOGENOM" id="CLU_110989_1_0_2"/>
<dbReference type="Proteomes" id="UP000001018">
    <property type="component" value="Chromosome"/>
</dbReference>
<dbReference type="GO" id="GO:0005694">
    <property type="term" value="C:chromosome"/>
    <property type="evidence" value="ECO:0007669"/>
    <property type="project" value="UniProtKB-SubCell"/>
</dbReference>
<dbReference type="GO" id="GO:0005737">
    <property type="term" value="C:cytoplasm"/>
    <property type="evidence" value="ECO:0007669"/>
    <property type="project" value="UniProtKB-SubCell"/>
</dbReference>
<dbReference type="GO" id="GO:0003690">
    <property type="term" value="F:double-stranded DNA binding"/>
    <property type="evidence" value="ECO:0007669"/>
    <property type="project" value="UniProtKB-UniRule"/>
</dbReference>
<dbReference type="GO" id="GO:0003723">
    <property type="term" value="F:RNA binding"/>
    <property type="evidence" value="ECO:0007669"/>
    <property type="project" value="InterPro"/>
</dbReference>
<dbReference type="GO" id="GO:0030261">
    <property type="term" value="P:chromosome condensation"/>
    <property type="evidence" value="ECO:0007669"/>
    <property type="project" value="UniProtKB-KW"/>
</dbReference>
<dbReference type="FunFam" id="3.30.110.20:FF:000008">
    <property type="entry name" value="DNA/RNA-binding protein Alba 1"/>
    <property type="match status" value="1"/>
</dbReference>
<dbReference type="Gene3D" id="3.30.110.20">
    <property type="entry name" value="Alba-like domain"/>
    <property type="match status" value="1"/>
</dbReference>
<dbReference type="HAMAP" id="MF_01122">
    <property type="entry name" value="AlbA"/>
    <property type="match status" value="1"/>
</dbReference>
<dbReference type="InterPro" id="IPR036882">
    <property type="entry name" value="Alba-like_dom_sf"/>
</dbReference>
<dbReference type="InterPro" id="IPR013795">
    <property type="entry name" value="DNA/RNA-bd_Alba"/>
</dbReference>
<dbReference type="InterPro" id="IPR002775">
    <property type="entry name" value="DNA/RNA-bd_Alba-like"/>
</dbReference>
<dbReference type="NCBIfam" id="TIGR00285">
    <property type="entry name" value="DNA-binding protein Alba"/>
    <property type="match status" value="1"/>
</dbReference>
<dbReference type="NCBIfam" id="NF003088">
    <property type="entry name" value="PRK04015.1"/>
    <property type="match status" value="1"/>
</dbReference>
<dbReference type="Pfam" id="PF01918">
    <property type="entry name" value="Alba"/>
    <property type="match status" value="1"/>
</dbReference>
<dbReference type="PIRSF" id="PIRSF028732">
    <property type="entry name" value="Alba"/>
    <property type="match status" value="1"/>
</dbReference>
<dbReference type="SUPFAM" id="SSF82704">
    <property type="entry name" value="AlbA-like"/>
    <property type="match status" value="1"/>
</dbReference>
<proteinExistence type="evidence at protein level"/>
<protein>
    <recommendedName>
        <fullName evidence="1">DNA/RNA-binding protein Alba</fullName>
    </recommendedName>
</protein>
<reference key="1">
    <citation type="journal article" date="2005" name="J. Bacteriol.">
        <title>The genome of Sulfolobus acidocaldarius, a model organism of the Crenarchaeota.</title>
        <authorList>
            <person name="Chen L."/>
            <person name="Bruegger K."/>
            <person name="Skovgaard M."/>
            <person name="Redder P."/>
            <person name="She Q."/>
            <person name="Torarinsson E."/>
            <person name="Greve B."/>
            <person name="Awayez M."/>
            <person name="Zibat A."/>
            <person name="Klenk H.-P."/>
            <person name="Garrett R.A."/>
        </authorList>
    </citation>
    <scope>NUCLEOTIDE SEQUENCE [LARGE SCALE GENOMIC DNA]</scope>
    <source>
        <strain>ATCC 33909 / DSM 639 / JCM 8929 / NBRC 15157 / NCIMB 11770</strain>
    </source>
</reference>
<evidence type="ECO:0000255" key="1">
    <source>
        <dbReference type="HAMAP-Rule" id="MF_01122"/>
    </source>
</evidence>
<keyword id="KW-0002">3D-structure</keyword>
<keyword id="KW-0007">Acetylation</keyword>
<keyword id="KW-0158">Chromosome</keyword>
<keyword id="KW-0963">Cytoplasm</keyword>
<keyword id="KW-0226">DNA condensation</keyword>
<keyword id="KW-0238">DNA-binding</keyword>
<keyword id="KW-1185">Reference proteome</keyword>
<comment type="function">
    <text evidence="1">Binds double-stranded DNA tightly but without sequence specificity. Involved in DNA compaction.</text>
</comment>
<comment type="subcellular location">
    <subcellularLocation>
        <location evidence="1">Cytoplasm</location>
    </subcellularLocation>
    <subcellularLocation>
        <location evidence="1">Chromosome</location>
    </subcellularLocation>
</comment>
<comment type="PTM">
    <text evidence="1">Acetylated. Acetylation at Lys-15 decreases DNA-binding affinity.</text>
</comment>
<comment type="similarity">
    <text evidence="1">Belongs to the histone-like Alba family.</text>
</comment>
<organism>
    <name type="scientific">Sulfolobus acidocaldarius (strain ATCC 33909 / DSM 639 / JCM 8929 / NBRC 15157 / NCIMB 11770)</name>
    <dbReference type="NCBI Taxonomy" id="330779"/>
    <lineage>
        <taxon>Archaea</taxon>
        <taxon>Thermoproteota</taxon>
        <taxon>Thermoprotei</taxon>
        <taxon>Sulfolobales</taxon>
        <taxon>Sulfolobaceae</taxon>
        <taxon>Sulfolobus</taxon>
    </lineage>
</organism>
<sequence length="97" mass="10503">MSSGATPSNVVLVGKKPVMNYVLAALTLLNQGVSEITIKARGRAISKAVDTVEIVRNRFLPDKIEVKEIRIGSQVVTSQDGRQSRVSTIEIGIRKKA</sequence>
<accession>Q4J973</accession>